<evidence type="ECO:0000250" key="1">
    <source>
        <dbReference type="UniProtKB" id="P80306"/>
    </source>
</evidence>
<evidence type="ECO:0000255" key="2">
    <source>
        <dbReference type="PROSITE-ProRule" id="PRU00465"/>
    </source>
</evidence>
<evidence type="ECO:0000269" key="3">
    <source>
    </source>
</evidence>
<evidence type="ECO:0000303" key="4">
    <source>
    </source>
</evidence>
<evidence type="ECO:0000305" key="5"/>
<evidence type="ECO:0000305" key="6">
    <source>
    </source>
</evidence>
<evidence type="ECO:0000312" key="7">
    <source>
        <dbReference type="EMBL" id="ARR56701.1"/>
    </source>
</evidence>
<dbReference type="EMBL" id="KJ020542">
    <property type="protein sequence ID" value="AHW42448.1"/>
    <property type="molecule type" value="Genomic_DNA"/>
</dbReference>
<dbReference type="EMBL" id="CP021181">
    <property type="protein sequence ID" value="ARR56701.1"/>
    <property type="molecule type" value="Genomic_DNA"/>
</dbReference>
<dbReference type="SMR" id="X5CFH4"/>
<dbReference type="KEGG" id="sphd:HY78_26295"/>
<dbReference type="GO" id="GO:0051537">
    <property type="term" value="F:2 iron, 2 sulfur cluster binding"/>
    <property type="evidence" value="ECO:0007669"/>
    <property type="project" value="UniProtKB-KW"/>
</dbReference>
<dbReference type="GO" id="GO:0009055">
    <property type="term" value="F:electron transfer activity"/>
    <property type="evidence" value="ECO:0007669"/>
    <property type="project" value="TreeGrafter"/>
</dbReference>
<dbReference type="GO" id="GO:0046872">
    <property type="term" value="F:metal ion binding"/>
    <property type="evidence" value="ECO:0007669"/>
    <property type="project" value="UniProtKB-KW"/>
</dbReference>
<dbReference type="GO" id="GO:0140647">
    <property type="term" value="P:P450-containing electron transport chain"/>
    <property type="evidence" value="ECO:0007669"/>
    <property type="project" value="InterPro"/>
</dbReference>
<dbReference type="CDD" id="cd00207">
    <property type="entry name" value="fer2"/>
    <property type="match status" value="1"/>
</dbReference>
<dbReference type="Gene3D" id="3.10.20.30">
    <property type="match status" value="1"/>
</dbReference>
<dbReference type="InterPro" id="IPR036010">
    <property type="entry name" value="2Fe-2S_ferredoxin-like_sf"/>
</dbReference>
<dbReference type="InterPro" id="IPR001041">
    <property type="entry name" value="2Fe-2S_ferredoxin-type"/>
</dbReference>
<dbReference type="InterPro" id="IPR001055">
    <property type="entry name" value="Adrenodoxin-like"/>
</dbReference>
<dbReference type="InterPro" id="IPR012675">
    <property type="entry name" value="Beta-grasp_dom_sf"/>
</dbReference>
<dbReference type="PANTHER" id="PTHR23426:SF65">
    <property type="entry name" value="FERREDOXIN-2, MITOCHONDRIAL"/>
    <property type="match status" value="1"/>
</dbReference>
<dbReference type="PANTHER" id="PTHR23426">
    <property type="entry name" value="FERREDOXIN/ADRENODOXIN"/>
    <property type="match status" value="1"/>
</dbReference>
<dbReference type="Pfam" id="PF00111">
    <property type="entry name" value="Fer2"/>
    <property type="match status" value="1"/>
</dbReference>
<dbReference type="PRINTS" id="PR00355">
    <property type="entry name" value="ADRENODOXIN"/>
</dbReference>
<dbReference type="SUPFAM" id="SSF54292">
    <property type="entry name" value="2Fe-2S ferredoxin-like"/>
    <property type="match status" value="1"/>
</dbReference>
<dbReference type="PROSITE" id="PS51085">
    <property type="entry name" value="2FE2S_FER_2"/>
    <property type="match status" value="1"/>
</dbReference>
<keyword id="KW-0001">2Fe-2S</keyword>
<keyword id="KW-0249">Electron transport</keyword>
<keyword id="KW-0408">Iron</keyword>
<keyword id="KW-0411">Iron-sulfur</keyword>
<keyword id="KW-0479">Metal-binding</keyword>
<keyword id="KW-0813">Transport</keyword>
<accession>X5CFH4</accession>
<name>CNDB1_RHIWD</name>
<sequence>MPTIIVTTRDGEELSLEADTGLSLMEVIRDGGADELLALCGGCCSCATCHVKVDPAFLAALPPMSEDESDLLDSSDHRDATSRLSCQITVDDGLAGLRVAIAPED</sequence>
<proteinExistence type="evidence at protein level"/>
<protein>
    <recommendedName>
        <fullName evidence="4">Chloroacetanilide N-alkylformylase 1, ferredoxin component</fullName>
    </recommendedName>
    <alternativeName>
        <fullName evidence="6">Ferredoxin CndB1</fullName>
    </alternativeName>
</protein>
<reference key="1">
    <citation type="journal article" date="2014" name="Appl. Environ. Microbiol.">
        <title>Novel three-component Rieske non-heme iron oxygenase system catalyzing the N-dealkylation of chloroacetanilide herbicides in sphingomonads DC-6 and DC-2.</title>
        <authorList>
            <person name="Chen Q."/>
            <person name="Wang C.H."/>
            <person name="Deng S.K."/>
            <person name="Wu Y.D."/>
            <person name="Li Y."/>
            <person name="Yao L."/>
            <person name="Jiang J.D."/>
            <person name="Yan X."/>
            <person name="He J."/>
            <person name="Li S.P."/>
        </authorList>
    </citation>
    <scope>NUCLEOTIDE SEQUENCE [LARGE SCALE GENOMIC DNA]</scope>
    <scope>FUNCTION</scope>
    <scope>SUBUNIT</scope>
    <source>
        <strain>DC-6 / KACC 16600</strain>
    </source>
</reference>
<reference key="2">
    <citation type="submission" date="2017-05" db="EMBL/GenBank/DDBJ databases">
        <title>Comparative genome analysis reveals the molecular basis of chloroacetanilide herbicide mineralization in Sphingomonas wittichii DC-6.</title>
        <authorList>
            <person name="Cheng M."/>
            <person name="Chen Q."/>
            <person name="Qiu J."/>
            <person name="Yan X."/>
            <person name="He J."/>
        </authorList>
    </citation>
    <scope>NUCLEOTIDE SEQUENCE [GENOMIC DNA]</scope>
    <source>
        <strain>DC-6 / KACC 16600</strain>
    </source>
</reference>
<comment type="function">
    <text evidence="3">Component of the chloroacetanilide N-alkylformylase multicomponent enzyme system involved in the degradation of chloroacetanilide herbicides (N-alkoxyalkyl-N-chloroacetyl-substituted aniline derivatives). In vitro, functions as an intermediate electron transfer protein.</text>
</comment>
<comment type="cofactor">
    <cofactor evidence="1">
        <name>[2Fe-2S] cluster</name>
        <dbReference type="ChEBI" id="CHEBI:190135"/>
    </cofactor>
    <text evidence="1">Binds 1 [2Fe-2S] cluster.</text>
</comment>
<comment type="subunit">
    <text evidence="3">The chloroacetanilide N-alkylformylase multicomponent enzyme system is composed of an oxygenase component (CndA) and an electron transfer component formed by a ferredoxin reductase (CndC1) and a ferredoxin (CndB1). In vitro, chloroacetanilide N-alkylformylase assays in which CndB1 is substituted for CndB2 demonstrate that the two enzymes possess nearly identical activities.</text>
</comment>
<comment type="similarity">
    <text evidence="5">Belongs to the adrenodoxin/putidaredoxin family.</text>
</comment>
<gene>
    <name evidence="4" type="primary">cndB1</name>
    <name evidence="7" type="ORF">HY78_26295</name>
</gene>
<organism>
    <name type="scientific">Rhizorhabdus wittichii (strain DC-6 / KACC 16600)</name>
    <name type="common">Sphingomonas wittichii</name>
    <dbReference type="NCBI Taxonomy" id="1283312"/>
    <lineage>
        <taxon>Bacteria</taxon>
        <taxon>Pseudomonadati</taxon>
        <taxon>Pseudomonadota</taxon>
        <taxon>Alphaproteobacteria</taxon>
        <taxon>Sphingomonadales</taxon>
        <taxon>Sphingomonadaceae</taxon>
        <taxon>Rhizorhabdus</taxon>
    </lineage>
</organism>
<feature type="chain" id="PRO_0000445252" description="Chloroacetanilide N-alkylformylase 1, ferredoxin component">
    <location>
        <begin position="1"/>
        <end position="105"/>
    </location>
</feature>
<feature type="domain" description="2Fe-2S ferredoxin-type" evidence="2">
    <location>
        <begin position="2"/>
        <end position="105"/>
    </location>
</feature>
<feature type="binding site" evidence="1">
    <location>
        <position position="40"/>
    </location>
    <ligand>
        <name>[2Fe-2S] cluster</name>
        <dbReference type="ChEBI" id="CHEBI:190135"/>
    </ligand>
</feature>
<feature type="binding site" evidence="1">
    <location>
        <position position="46"/>
    </location>
    <ligand>
        <name>[2Fe-2S] cluster</name>
        <dbReference type="ChEBI" id="CHEBI:190135"/>
    </ligand>
</feature>
<feature type="binding site" evidence="1">
    <location>
        <position position="49"/>
    </location>
    <ligand>
        <name>[2Fe-2S] cluster</name>
        <dbReference type="ChEBI" id="CHEBI:190135"/>
    </ligand>
</feature>
<feature type="binding site" evidence="1">
    <location>
        <position position="86"/>
    </location>
    <ligand>
        <name>[2Fe-2S] cluster</name>
        <dbReference type="ChEBI" id="CHEBI:190135"/>
    </ligand>
</feature>